<keyword id="KW-0500">Molybdenum</keyword>
<keyword id="KW-0535">Nitrogen fixation</keyword>
<keyword id="KW-0614">Plasmid</keyword>
<keyword id="KW-1185">Reference proteome</keyword>
<sequence length="230" mass="25460">MSNLAQVRALSKGRVTLGIRMTDRPGWRQLSELLDLGPWPPTDLEMDFDQYVFACVLSRALEEIDAGEATATEATGLSQVELRDILNRSFPAPTIHVFRLEEVRDSEPGPEEALLRGLLLAHARAGDSASVLFAKIIARRALRHDHLWRELGLFDRVELSRLLASHFPTLAAGNTQNMRWKKYFYRKLCEAEGYSLCTAPSCPQCKELESCFGSGEGESASPVGKVGGEA</sequence>
<gene>
    <name type="primary">nifQ</name>
    <name type="ordered locus">NGR_a01190</name>
    <name type="ORF">y4vE</name>
</gene>
<accession>Q53213</accession>
<protein>
    <recommendedName>
        <fullName>Protein NifQ homolog</fullName>
    </recommendedName>
</protein>
<organism>
    <name type="scientific">Sinorhizobium fredii (strain NBRC 101917 / NGR234)</name>
    <dbReference type="NCBI Taxonomy" id="394"/>
    <lineage>
        <taxon>Bacteria</taxon>
        <taxon>Pseudomonadati</taxon>
        <taxon>Pseudomonadota</taxon>
        <taxon>Alphaproteobacteria</taxon>
        <taxon>Hyphomicrobiales</taxon>
        <taxon>Rhizobiaceae</taxon>
        <taxon>Sinorhizobium/Ensifer group</taxon>
        <taxon>Sinorhizobium</taxon>
    </lineage>
</organism>
<proteinExistence type="inferred from homology"/>
<reference key="1">
    <citation type="journal article" date="1996" name="Genome Res.">
        <title>Sequencing the 500-kb GC-rich symbiotic replicon of Rhizobium sp. NGR234 using dye terminators and a thermostable 'sequenase': a beginning.</title>
        <authorList>
            <person name="Freiberg C."/>
            <person name="Perret X."/>
            <person name="Broughton W.J."/>
            <person name="Rosenthal A."/>
        </authorList>
    </citation>
    <scope>NUCLEOTIDE SEQUENCE [GENOMIC DNA]</scope>
</reference>
<reference key="2">
    <citation type="journal article" date="1997" name="Nature">
        <title>Molecular basis of symbiosis between Rhizobium and legumes.</title>
        <authorList>
            <person name="Freiberg C.A."/>
            <person name="Fellay R."/>
            <person name="Bairoch A."/>
            <person name="Broughton W.J."/>
            <person name="Rosenthal A."/>
            <person name="Perret X."/>
        </authorList>
    </citation>
    <scope>NUCLEOTIDE SEQUENCE [LARGE SCALE GENOMIC DNA]</scope>
    <source>
        <strain>NBRC 101917 / NGR234</strain>
    </source>
</reference>
<reference key="3">
    <citation type="journal article" date="2009" name="Appl. Environ. Microbiol.">
        <title>Rhizobium sp. strain NGR234 possesses a remarkable number of secretion systems.</title>
        <authorList>
            <person name="Schmeisser C."/>
            <person name="Liesegang H."/>
            <person name="Krysciak D."/>
            <person name="Bakkou N."/>
            <person name="Le Quere A."/>
            <person name="Wollherr A."/>
            <person name="Heinemeyer I."/>
            <person name="Morgenstern B."/>
            <person name="Pommerening-Roeser A."/>
            <person name="Flores M."/>
            <person name="Palacios R."/>
            <person name="Brenner S."/>
            <person name="Gottschalk G."/>
            <person name="Schmitz R.A."/>
            <person name="Broughton W.J."/>
            <person name="Perret X."/>
            <person name="Strittmatter A.W."/>
            <person name="Streit W.R."/>
        </authorList>
    </citation>
    <scope>NUCLEOTIDE SEQUENCE [LARGE SCALE GENOMIC DNA]</scope>
    <source>
        <strain>NBRC 101917 / NGR234</strain>
    </source>
</reference>
<geneLocation type="plasmid">
    <name>sym pNGR234a</name>
</geneLocation>
<evidence type="ECO:0000305" key="1"/>
<name>NIFQ_SINFN</name>
<feature type="chain" id="PRO_0000096823" description="Protein NifQ homolog">
    <location>
        <begin position="1"/>
        <end position="230"/>
    </location>
</feature>
<dbReference type="EMBL" id="Z68203">
    <property type="protein sequence ID" value="CAA92420.1"/>
    <property type="molecule type" value="Genomic_DNA"/>
</dbReference>
<dbReference type="EMBL" id="U00090">
    <property type="protein sequence ID" value="AAB91893.1"/>
    <property type="molecule type" value="Genomic_DNA"/>
</dbReference>
<dbReference type="RefSeq" id="NP_444106.1">
    <property type="nucleotide sequence ID" value="NC_000914.2"/>
</dbReference>
<dbReference type="RefSeq" id="WP_010875157.1">
    <property type="nucleotide sequence ID" value="NC_000914.2"/>
</dbReference>
<dbReference type="KEGG" id="rhi:NGR_a01190"/>
<dbReference type="PATRIC" id="fig|394.7.peg.103"/>
<dbReference type="eggNOG" id="ENOG50327FW">
    <property type="taxonomic scope" value="Bacteria"/>
</dbReference>
<dbReference type="HOGENOM" id="CLU_094545_1_0_5"/>
<dbReference type="OrthoDB" id="192277at2"/>
<dbReference type="Proteomes" id="UP000001054">
    <property type="component" value="Plasmid pNGR234a"/>
</dbReference>
<dbReference type="GO" id="GO:0030151">
    <property type="term" value="F:molybdenum ion binding"/>
    <property type="evidence" value="ECO:0007669"/>
    <property type="project" value="InterPro"/>
</dbReference>
<dbReference type="GO" id="GO:0009399">
    <property type="term" value="P:nitrogen fixation"/>
    <property type="evidence" value="ECO:0007669"/>
    <property type="project" value="UniProtKB-KW"/>
</dbReference>
<dbReference type="InterPro" id="IPR006975">
    <property type="entry name" value="NifQ"/>
</dbReference>
<dbReference type="Pfam" id="PF04891">
    <property type="entry name" value="NifQ"/>
    <property type="match status" value="1"/>
</dbReference>
<comment type="function">
    <text>Probably involved in molybdenum processing.</text>
</comment>
<comment type="similarity">
    <text evidence="1">Belongs to the NifQ family.</text>
</comment>